<evidence type="ECO:0000255" key="1">
    <source>
        <dbReference type="HAMAP-Rule" id="MF_00390"/>
    </source>
</evidence>
<dbReference type="EC" id="2.8.1.-" evidence="1"/>
<dbReference type="EMBL" id="CP000468">
    <property type="protein sequence ID" value="ABJ02822.1"/>
    <property type="molecule type" value="Genomic_DNA"/>
</dbReference>
<dbReference type="RefSeq" id="WP_001209702.1">
    <property type="nucleotide sequence ID" value="NZ_CADILS010000059.1"/>
</dbReference>
<dbReference type="SMR" id="A1AGN2"/>
<dbReference type="KEGG" id="ecv:APECO1_3108"/>
<dbReference type="HOGENOM" id="CLU_132095_0_0_6"/>
<dbReference type="Proteomes" id="UP000008216">
    <property type="component" value="Chromosome"/>
</dbReference>
<dbReference type="GO" id="GO:1990228">
    <property type="term" value="C:sulfurtransferase complex"/>
    <property type="evidence" value="ECO:0007669"/>
    <property type="project" value="TreeGrafter"/>
</dbReference>
<dbReference type="GO" id="GO:0097163">
    <property type="term" value="F:sulfur carrier activity"/>
    <property type="evidence" value="ECO:0007669"/>
    <property type="project" value="TreeGrafter"/>
</dbReference>
<dbReference type="GO" id="GO:0016783">
    <property type="term" value="F:sulfurtransferase activity"/>
    <property type="evidence" value="ECO:0007669"/>
    <property type="project" value="UniProtKB-UniRule"/>
</dbReference>
<dbReference type="GO" id="GO:0002143">
    <property type="term" value="P:tRNA wobble position uridine thiolation"/>
    <property type="evidence" value="ECO:0007669"/>
    <property type="project" value="TreeGrafter"/>
</dbReference>
<dbReference type="FunFam" id="3.40.1260.10:FF:000001">
    <property type="entry name" value="Sulfurtransferase TusD"/>
    <property type="match status" value="1"/>
</dbReference>
<dbReference type="Gene3D" id="3.40.1260.10">
    <property type="entry name" value="DsrEFH-like"/>
    <property type="match status" value="1"/>
</dbReference>
<dbReference type="HAMAP" id="MF_00390">
    <property type="entry name" value="Thiourid_synth_D"/>
    <property type="match status" value="1"/>
</dbReference>
<dbReference type="InterPro" id="IPR027396">
    <property type="entry name" value="DsrEFH-like"/>
</dbReference>
<dbReference type="InterPro" id="IPR003787">
    <property type="entry name" value="Sulphur_relay_DsrE/F-like"/>
</dbReference>
<dbReference type="InterPro" id="IPR017463">
    <property type="entry name" value="Sulphur_relay_TusD/DsrE"/>
</dbReference>
<dbReference type="NCBIfam" id="NF001237">
    <property type="entry name" value="PRK00207.1"/>
    <property type="match status" value="1"/>
</dbReference>
<dbReference type="NCBIfam" id="TIGR03012">
    <property type="entry name" value="sulf_tusD_dsrE"/>
    <property type="match status" value="1"/>
</dbReference>
<dbReference type="PANTHER" id="PTHR34874">
    <property type="entry name" value="PROTEIN YCHN"/>
    <property type="match status" value="1"/>
</dbReference>
<dbReference type="PANTHER" id="PTHR34874:SF3">
    <property type="entry name" value="SULFURTRANSFERASE TUSD"/>
    <property type="match status" value="1"/>
</dbReference>
<dbReference type="Pfam" id="PF02635">
    <property type="entry name" value="DsrE"/>
    <property type="match status" value="1"/>
</dbReference>
<dbReference type="SUPFAM" id="SSF75169">
    <property type="entry name" value="DsrEFH-like"/>
    <property type="match status" value="1"/>
</dbReference>
<organism>
    <name type="scientific">Escherichia coli O1:K1 / APEC</name>
    <dbReference type="NCBI Taxonomy" id="405955"/>
    <lineage>
        <taxon>Bacteria</taxon>
        <taxon>Pseudomonadati</taxon>
        <taxon>Pseudomonadota</taxon>
        <taxon>Gammaproteobacteria</taxon>
        <taxon>Enterobacterales</taxon>
        <taxon>Enterobacteriaceae</taxon>
        <taxon>Escherichia</taxon>
    </lineage>
</organism>
<accession>A1AGN2</accession>
<proteinExistence type="inferred from homology"/>
<protein>
    <recommendedName>
        <fullName evidence="1">Sulfurtransferase TusD</fullName>
        <ecNumber evidence="1">2.8.1.-</ecNumber>
    </recommendedName>
    <alternativeName>
        <fullName evidence="1">tRNA 2-thiouridine synthesizing protein D</fullName>
    </alternativeName>
</protein>
<reference key="1">
    <citation type="journal article" date="2007" name="J. Bacteriol.">
        <title>The genome sequence of avian pathogenic Escherichia coli strain O1:K1:H7 shares strong similarities with human extraintestinal pathogenic E. coli genomes.</title>
        <authorList>
            <person name="Johnson T.J."/>
            <person name="Kariyawasam S."/>
            <person name="Wannemuehler Y."/>
            <person name="Mangiamele P."/>
            <person name="Johnson S.J."/>
            <person name="Doetkott C."/>
            <person name="Skyberg J.A."/>
            <person name="Lynne A.M."/>
            <person name="Johnson J.R."/>
            <person name="Nolan L.K."/>
        </authorList>
    </citation>
    <scope>NUCLEOTIDE SEQUENCE [LARGE SCALE GENOMIC DNA]</scope>
</reference>
<name>TUSD_ECOK1</name>
<sequence length="128" mass="13704">MRFAIVVTGPAYGTQQASSAFQFAQALIAEGHELSSVFFYREGVYNANQLTSPASDEFDLVRSWQQLNMQHGVALNICVAAALRRGVVDETEAGRLGLASSNLQTGFTLSGLGALAEASLTCDRVVQF</sequence>
<feature type="chain" id="PRO_1000013251" description="Sulfurtransferase TusD">
    <location>
        <begin position="1"/>
        <end position="128"/>
    </location>
</feature>
<feature type="active site" description="Cysteine persulfide intermediate" evidence="1">
    <location>
        <position position="78"/>
    </location>
</feature>
<gene>
    <name evidence="1" type="primary">tusD</name>
    <name type="ordered locus">Ecok1_33280</name>
    <name type="ORF">APECO1_3108</name>
</gene>
<keyword id="KW-0963">Cytoplasm</keyword>
<keyword id="KW-1185">Reference proteome</keyword>
<keyword id="KW-0808">Transferase</keyword>
<keyword id="KW-0819">tRNA processing</keyword>
<comment type="function">
    <text evidence="1">Part of a sulfur-relay system required for 2-thiolation of 5-methylaminomethyl-2-thiouridine (mnm(5)s(2)U) at tRNA wobble positions. Accepts sulfur from TusA and transfers it in turn to TusE.</text>
</comment>
<comment type="subunit">
    <text evidence="1">Heterohexamer, formed by a dimer of trimers. The hexameric TusBCD complex contains 2 copies each of TusB, TusC and TusD. The TusBCD complex interacts with TusE.</text>
</comment>
<comment type="subcellular location">
    <subcellularLocation>
        <location evidence="1">Cytoplasm</location>
    </subcellularLocation>
</comment>
<comment type="similarity">
    <text evidence="1">Belongs to the DsrE/TusD family.</text>
</comment>